<dbReference type="EMBL" id="AL844508">
    <property type="protein sequence ID" value="CAD51802.1"/>
    <property type="molecule type" value="Genomic_DNA"/>
</dbReference>
<dbReference type="RefSeq" id="XP_001351991.1">
    <property type="nucleotide sequence ID" value="XM_001351955.1"/>
</dbReference>
<dbReference type="SMR" id="Q8I333"/>
<dbReference type="FunCoup" id="Q8I333">
    <property type="interactions" value="2"/>
</dbReference>
<dbReference type="STRING" id="36329.Q8I333"/>
<dbReference type="MEROPS" id="I71.001"/>
<dbReference type="PaxDb" id="5833-PFI0580c"/>
<dbReference type="EnsemblProtists" id="CAD51802">
    <property type="protein sequence ID" value="CAD51802"/>
    <property type="gene ID" value="PF3D7_0911900"/>
</dbReference>
<dbReference type="GeneID" id="813396"/>
<dbReference type="KEGG" id="pfa:PF3D7_0911900"/>
<dbReference type="VEuPathDB" id="PlasmoDB:PF3D7_0911900"/>
<dbReference type="HOGENOM" id="CLU_761818_0_0_1"/>
<dbReference type="InParanoid" id="Q8I333"/>
<dbReference type="OMA" id="FFVFNIC"/>
<dbReference type="OrthoDB" id="371298at2759"/>
<dbReference type="PhylomeDB" id="Q8I333"/>
<dbReference type="Proteomes" id="UP000001450">
    <property type="component" value="Chromosome 9"/>
</dbReference>
<dbReference type="GO" id="GO:0005829">
    <property type="term" value="C:cytosol"/>
    <property type="evidence" value="ECO:0000314"/>
    <property type="project" value="GeneDB"/>
</dbReference>
<dbReference type="GO" id="GO:0005576">
    <property type="term" value="C:extracellular region"/>
    <property type="evidence" value="ECO:0007669"/>
    <property type="project" value="UniProtKB-SubCell"/>
</dbReference>
<dbReference type="GO" id="GO:0030430">
    <property type="term" value="C:host cell cytoplasm"/>
    <property type="evidence" value="ECO:0000314"/>
    <property type="project" value="GeneDB"/>
</dbReference>
<dbReference type="GO" id="GO:0020009">
    <property type="term" value="C:microneme"/>
    <property type="evidence" value="ECO:0007669"/>
    <property type="project" value="UniProtKB-SubCell"/>
</dbReference>
<dbReference type="GO" id="GO:0030133">
    <property type="term" value="C:transport vesicle"/>
    <property type="evidence" value="ECO:0007669"/>
    <property type="project" value="UniProtKB-SubCell"/>
</dbReference>
<dbReference type="GO" id="GO:0004869">
    <property type="term" value="F:cysteine-type endopeptidase inhibitor activity"/>
    <property type="evidence" value="ECO:0000314"/>
    <property type="project" value="GeneDB"/>
</dbReference>
<dbReference type="GO" id="GO:0044409">
    <property type="term" value="P:symbiont entry into host"/>
    <property type="evidence" value="ECO:0000314"/>
    <property type="project" value="GeneDB"/>
</dbReference>
<dbReference type="FunFam" id="2.60.40.2020:FF:000002">
    <property type="entry name" value="Inhibitor of cysteine proteases"/>
    <property type="match status" value="1"/>
</dbReference>
<dbReference type="Gene3D" id="2.60.40.2020">
    <property type="match status" value="2"/>
</dbReference>
<dbReference type="InterPro" id="IPR036331">
    <property type="entry name" value="Chagasin-like_sf"/>
</dbReference>
<dbReference type="InterPro" id="IPR024321">
    <property type="entry name" value="Prot_Inh_falstatin"/>
</dbReference>
<dbReference type="Pfam" id="PF12628">
    <property type="entry name" value="Inhibitor_I71"/>
    <property type="match status" value="1"/>
</dbReference>
<dbReference type="SUPFAM" id="SSF141066">
    <property type="entry name" value="ICP-like"/>
    <property type="match status" value="1"/>
</dbReference>
<gene>
    <name evidence="8" type="primary">ICP</name>
    <name evidence="10" type="ORF">PF3D7_0911900</name>
</gene>
<proteinExistence type="evidence at protein level"/>
<accession>Q8I333</accession>
<name>ICP_PLAF7</name>
<keyword id="KW-0968">Cytoplasmic vesicle</keyword>
<keyword id="KW-1035">Host cytoplasm</keyword>
<keyword id="KW-0646">Protease inhibitor</keyword>
<keyword id="KW-1185">Reference proteome</keyword>
<keyword id="KW-0964">Secreted</keyword>
<keyword id="KW-0732">Signal</keyword>
<keyword id="KW-0789">Thiol protease inhibitor</keyword>
<sequence>MNLLVFFCFFLLSCIVHLSRCSDNNSYSFEIVNRSTWLNIAERIFKGNAPFNFTIIPYNYVNNSTEENNNKDSVLLISKNLKNSSNPVDENNHIIDSTKKNTSNNNNNNSNIVGIYESQVHEEKIKEDNTRQDNINKKENEIINNNHQIPVSNIFSENIDNNKNYIESNYKSTYNNNPELIHSTDFIGSNNNHTFNFLSRYNNSVLNNMQGNTKVPGNVPELKARIFSEEENTEVESAENNHTNSLNPNESCDQIIKLGDIINSVNEKIISINSTVNNVLCINLDSVNGNGFVWTLLGVHKKKPLIDPSNFPTKRVTQSYVSPDISVTNPVPIPKNSNTNKDDSINNKQDGSQNNTTTNHFPKPREQLVGGSSMLISKIKPHKPGKYFIVYSYYRPFDPTRDTNTRIVELNVQ</sequence>
<feature type="signal peptide" evidence="2">
    <location>
        <begin position="1"/>
        <end position="21"/>
    </location>
</feature>
<feature type="chain" id="PRO_5004310657" description="Falstatin" evidence="2">
    <location>
        <begin position="22"/>
        <end position="413"/>
    </location>
</feature>
<feature type="region of interest" description="Disordered" evidence="3">
    <location>
        <begin position="325"/>
        <end position="367"/>
    </location>
</feature>
<feature type="short sequence motif" description="BC loop; binds and inhibits the active site cavity of cysteine proteases" evidence="6">
    <location>
        <begin position="284"/>
        <end position="294"/>
    </location>
</feature>
<feature type="compositionally biased region" description="Polar residues" evidence="3">
    <location>
        <begin position="325"/>
        <end position="339"/>
    </location>
</feature>
<feature type="compositionally biased region" description="Polar residues" evidence="3">
    <location>
        <begin position="346"/>
        <end position="360"/>
    </location>
</feature>
<feature type="mutagenesis site" description="No effect on the inhibition of FP3 protease activity." evidence="6">
    <original>N</original>
    <variation>A</variation>
    <location>
        <position position="288"/>
    </location>
</feature>
<feature type="mutagenesis site" description="No effect on the inhibition of FP3 protease activity." evidence="6">
    <original>F</original>
    <variation>A</variation>
    <location>
        <position position="397"/>
    </location>
</feature>
<comment type="function">
    <text evidence="1 4 6">Cysteine protease inhibitor (PubMed:17083274, PubMed:24699522). Inhibits cysteine protease falcipains FP2 and FP3 (PubMed:17083274). Required for the invasion of host erythrocytes by merozoites (PubMed:17083274). In the mosquito vector, essential for the gliding motility of hemocoel sporozoites and, therefore, for salivary gland invasion and the subsequent transmission from the mosquito to the mammalian host (By similarity). Required for the invasion of host hepatocytes (By similarity). During the liver stage, may prevent host hepatocyte cell death likely by inhibiting host cysteine proteases (By similarity).</text>
</comment>
<comment type="subunit">
    <text evidence="6">Oligomer; probably composed of 10 monomers.</text>
</comment>
<comment type="subcellular location">
    <subcellularLocation>
        <location evidence="1">Secreted</location>
    </subcellularLocation>
    <subcellularLocation>
        <location evidence="1">Cytoplasmic vesicle</location>
        <location evidence="1">Secretory vesicle</location>
        <location evidence="1">Microneme</location>
    </subcellularLocation>
    <subcellularLocation>
        <location evidence="1">Cytoplasmic vesicle</location>
        <location evidence="1">Secretory vesicle</location>
    </subcellularLocation>
    <subcellularLocation>
        <location evidence="5">Parasitophorous vacuole lumen</location>
    </subcellularLocation>
    <subcellularLocation>
        <location evidence="5">Host cytoplasm</location>
    </subcellularLocation>
    <text evidence="1 4 5">During the asexual blood stage, localizes to the parasitophorous vacuole (PV) and to exomembrane structures beyond the limits of the PV (PubMed:23421981). Localizes to punctate peripheral structures in schizonts and rings (PubMed:17083274). Released after host erythrocyte rupture (PubMed:17083274). Secreted by gliding sporozoites (By similarity). Localizes partially with micronemes at the apical pole of sporozoites (By similarity). Released into the host cytoplasm by sporozoites (By similarity). During the host liver stage and in late schizont and cytomere stages, localizes mainly to the PV, but is also present in the parasite cytoplasm (PubMed:23421981). After completion of daughter parasite development, localizes to the host hepatocyte cytoplasm following the rupture of the PV membrane (PubMed:23421981).</text>
</comment>
<comment type="developmental stage">
    <text evidence="4 5">Expressed during the asexual blood stage; highly expressed in early rings, late schizonts and free merozoites, and to a lesser extent in late rings and early schizonts (at protein level) (PubMed:17083274, PubMed:23421981). Not expressed trophozoites (at protein level) (PubMed:17083274). Expressed during the liver stage (at protein level) (PubMed:23421981).</text>
</comment>
<comment type="domain">
    <text evidence="1">The C-terminal domain is sufficient for cysteine protease inhibition.</text>
</comment>
<comment type="PTM">
    <text evidence="4 5">Proteolytically cleaved.</text>
</comment>
<comment type="similarity">
    <text evidence="9">Belongs to the protease inhibitor I71 family.</text>
</comment>
<reference evidence="11" key="1">
    <citation type="journal article" date="2002" name="Nature">
        <title>Genome sequence of the human malaria parasite Plasmodium falciparum.</title>
        <authorList>
            <person name="Gardner M.J."/>
            <person name="Hall N."/>
            <person name="Fung E."/>
            <person name="White O."/>
            <person name="Berriman M."/>
            <person name="Hyman R.W."/>
            <person name="Carlton J.M."/>
            <person name="Pain A."/>
            <person name="Nelson K.E."/>
            <person name="Bowman S."/>
            <person name="Paulsen I.T."/>
            <person name="James K.D."/>
            <person name="Eisen J.A."/>
            <person name="Rutherford K.M."/>
            <person name="Salzberg S.L."/>
            <person name="Craig A."/>
            <person name="Kyes S."/>
            <person name="Chan M.-S."/>
            <person name="Nene V."/>
            <person name="Shallom S.J."/>
            <person name="Suh B."/>
            <person name="Peterson J."/>
            <person name="Angiuoli S."/>
            <person name="Pertea M."/>
            <person name="Allen J."/>
            <person name="Selengut J."/>
            <person name="Haft D."/>
            <person name="Mather M.W."/>
            <person name="Vaidya A.B."/>
            <person name="Martin D.M.A."/>
            <person name="Fairlamb A.H."/>
            <person name="Fraunholz M.J."/>
            <person name="Roos D.S."/>
            <person name="Ralph S.A."/>
            <person name="McFadden G.I."/>
            <person name="Cummings L.M."/>
            <person name="Subramanian G.M."/>
            <person name="Mungall C."/>
            <person name="Venter J.C."/>
            <person name="Carucci D.J."/>
            <person name="Hoffman S.L."/>
            <person name="Newbold C."/>
            <person name="Davis R.W."/>
            <person name="Fraser C.M."/>
            <person name="Barrell B.G."/>
        </authorList>
    </citation>
    <scope>NUCLEOTIDE SEQUENCE [LARGE SCALE GENOMIC DNA]</scope>
    <source>
        <strain evidence="11">3D7</strain>
    </source>
</reference>
<reference evidence="11" key="2">
    <citation type="journal article" date="2002" name="Nature">
        <title>Sequence of Plasmodium falciparum chromosomes 1, 3-9 and 13.</title>
        <authorList>
            <person name="Hall N."/>
            <person name="Pain A."/>
            <person name="Berriman M."/>
            <person name="Churcher C.M."/>
            <person name="Harris B."/>
            <person name="Harris D."/>
            <person name="Mungall K.L."/>
            <person name="Bowman S."/>
            <person name="Atkin R."/>
            <person name="Baker S."/>
            <person name="Barron A."/>
            <person name="Brooks K."/>
            <person name="Buckee C.O."/>
            <person name="Burrows C."/>
            <person name="Cherevach I."/>
            <person name="Chillingworth C."/>
            <person name="Chillingworth T."/>
            <person name="Christodoulou Z."/>
            <person name="Clark L."/>
            <person name="Clark R."/>
            <person name="Corton C."/>
            <person name="Cronin A."/>
            <person name="Davies R.M."/>
            <person name="Davis P."/>
            <person name="Dear P."/>
            <person name="Dearden F."/>
            <person name="Doggett J."/>
            <person name="Feltwell T."/>
            <person name="Goble A."/>
            <person name="Goodhead I."/>
            <person name="Gwilliam R."/>
            <person name="Hamlin N."/>
            <person name="Hance Z."/>
            <person name="Harper D."/>
            <person name="Hauser H."/>
            <person name="Hornsby T."/>
            <person name="Holroyd S."/>
            <person name="Horrocks P."/>
            <person name="Humphray S."/>
            <person name="Jagels K."/>
            <person name="James K.D."/>
            <person name="Johnson D."/>
            <person name="Kerhornou A."/>
            <person name="Knights A."/>
            <person name="Konfortov B."/>
            <person name="Kyes S."/>
            <person name="Larke N."/>
            <person name="Lawson D."/>
            <person name="Lennard N."/>
            <person name="Line A."/>
            <person name="Maddison M."/>
            <person name="Mclean J."/>
            <person name="Mooney P."/>
            <person name="Moule S."/>
            <person name="Murphy L."/>
            <person name="Oliver K."/>
            <person name="Ormond D."/>
            <person name="Price C."/>
            <person name="Quail M.A."/>
            <person name="Rabbinowitsch E."/>
            <person name="Rajandream M.A."/>
            <person name="Rutter S."/>
            <person name="Rutherford K.M."/>
            <person name="Sanders M."/>
            <person name="Simmonds M."/>
            <person name="Seeger K."/>
            <person name="Sharp S."/>
            <person name="Smith R."/>
            <person name="Squares R."/>
            <person name="Squares S."/>
            <person name="Stevens K."/>
            <person name="Taylor K."/>
            <person name="Tivey A."/>
            <person name="Unwin L."/>
            <person name="Whitehead S."/>
            <person name="Woodward J.R."/>
            <person name="Sulston J.E."/>
            <person name="Craig A."/>
            <person name="Newbold C."/>
            <person name="Barrell B.G."/>
        </authorList>
    </citation>
    <scope>NUCLEOTIDE SEQUENCE [LARGE SCALE GENOMIC DNA]</scope>
    <source>
        <strain evidence="11">3D7</strain>
    </source>
</reference>
<reference evidence="9" key="3">
    <citation type="journal article" date="2006" name="PLoS Pathog.">
        <title>Falstatin, a cysteine protease inhibitor of Plasmodium falciparum, facilitates erythrocyte invasion.</title>
        <authorList>
            <person name="Pandey K.C."/>
            <person name="Singh N."/>
            <person name="Arastu-Kapur S."/>
            <person name="Bogyo M."/>
            <person name="Rosenthal P.J."/>
        </authorList>
    </citation>
    <scope>FUNCTION</scope>
    <scope>SUBCELLULAR LOCATION</scope>
    <scope>DEVELOPMENTAL STAGE</scope>
    <scope>PROTEOLYTIC CLEAVAGE</scope>
</reference>
<reference evidence="9" key="4">
    <citation type="journal article" date="2013" name="Cell. Microbiol.">
        <title>Plasmodium yoelii inhibitor of cysteine proteases is exported to exomembrane structures and interacts with yoelipain-2 during asexual blood-stage development.</title>
        <authorList>
            <person name="Pei Y."/>
            <person name="Miller J.L."/>
            <person name="Lindner S.E."/>
            <person name="Vaughan A.M."/>
            <person name="Torii M."/>
            <person name="Kappe S.H.I."/>
        </authorList>
    </citation>
    <scope>SUBCELLULAR LOCATION</scope>
    <scope>DEVELOPMENTAL STAGE</scope>
    <scope>PROTEOLYTIC CLEAVAGE</scope>
</reference>
<reference evidence="9" key="5">
    <citation type="journal article" date="2014" name="PLoS ONE">
        <title>Cross-talk between malarial cysteine proteases and falstatin: the BC loop as a hot-spot target.</title>
        <authorList>
            <person name="Sundararaj S."/>
            <person name="Saxena A.K."/>
            <person name="Sharma R."/>
            <person name="Vashisht K."/>
            <person name="Sharma S."/>
            <person name="Anvikar A."/>
            <person name="Dixit R."/>
            <person name="Rosenthal P.J."/>
            <person name="Pandey K.C."/>
        </authorList>
    </citation>
    <scope>FUNCTION</scope>
    <scope>SUBUNIT</scope>
    <scope>MOTIF</scope>
    <scope>MUTAGENESIS OF ASN-288 AND PHE-397</scope>
</reference>
<evidence type="ECO:0000250" key="1">
    <source>
        <dbReference type="UniProtKB" id="A0A509AJA5"/>
    </source>
</evidence>
<evidence type="ECO:0000255" key="2"/>
<evidence type="ECO:0000256" key="3">
    <source>
        <dbReference type="SAM" id="MobiDB-lite"/>
    </source>
</evidence>
<evidence type="ECO:0000269" key="4">
    <source>
    </source>
</evidence>
<evidence type="ECO:0000269" key="5">
    <source>
    </source>
</evidence>
<evidence type="ECO:0000269" key="6">
    <source>
    </source>
</evidence>
<evidence type="ECO:0000303" key="7">
    <source>
    </source>
</evidence>
<evidence type="ECO:0000303" key="8">
    <source>
    </source>
</evidence>
<evidence type="ECO:0000305" key="9"/>
<evidence type="ECO:0000312" key="10">
    <source>
        <dbReference type="EMBL" id="CAD51802.1"/>
    </source>
</evidence>
<evidence type="ECO:0000312" key="11">
    <source>
        <dbReference type="Proteomes" id="UP000001450"/>
    </source>
</evidence>
<protein>
    <recommendedName>
        <fullName evidence="7">Falstatin</fullName>
    </recommendedName>
    <alternativeName>
        <fullName evidence="8">Cysteine protease inhibitor</fullName>
        <shortName evidence="8">PfICP</shortName>
    </alternativeName>
</protein>
<organism evidence="11">
    <name type="scientific">Plasmodium falciparum (isolate 3D7)</name>
    <dbReference type="NCBI Taxonomy" id="36329"/>
    <lineage>
        <taxon>Eukaryota</taxon>
        <taxon>Sar</taxon>
        <taxon>Alveolata</taxon>
        <taxon>Apicomplexa</taxon>
        <taxon>Aconoidasida</taxon>
        <taxon>Haemosporida</taxon>
        <taxon>Plasmodiidae</taxon>
        <taxon>Plasmodium</taxon>
        <taxon>Plasmodium (Laverania)</taxon>
    </lineage>
</organism>